<feature type="chain" id="PRO_1000014307" description="Small ribosomal subunit protein uS7">
    <location>
        <begin position="1"/>
        <end position="156"/>
    </location>
</feature>
<accession>Q03IS0</accession>
<dbReference type="EMBL" id="CP000419">
    <property type="protein sequence ID" value="ABJ66902.1"/>
    <property type="molecule type" value="Genomic_DNA"/>
</dbReference>
<dbReference type="RefSeq" id="WP_011226575.1">
    <property type="nucleotide sequence ID" value="NC_008532.1"/>
</dbReference>
<dbReference type="SMR" id="Q03IS0"/>
<dbReference type="GeneID" id="66899520"/>
<dbReference type="KEGG" id="ste:STER_1763"/>
<dbReference type="HOGENOM" id="CLU_072226_1_1_9"/>
<dbReference type="GO" id="GO:0015935">
    <property type="term" value="C:small ribosomal subunit"/>
    <property type="evidence" value="ECO:0007669"/>
    <property type="project" value="InterPro"/>
</dbReference>
<dbReference type="GO" id="GO:0019843">
    <property type="term" value="F:rRNA binding"/>
    <property type="evidence" value="ECO:0007669"/>
    <property type="project" value="UniProtKB-UniRule"/>
</dbReference>
<dbReference type="GO" id="GO:0003735">
    <property type="term" value="F:structural constituent of ribosome"/>
    <property type="evidence" value="ECO:0007669"/>
    <property type="project" value="InterPro"/>
</dbReference>
<dbReference type="GO" id="GO:0000049">
    <property type="term" value="F:tRNA binding"/>
    <property type="evidence" value="ECO:0007669"/>
    <property type="project" value="UniProtKB-UniRule"/>
</dbReference>
<dbReference type="GO" id="GO:0006412">
    <property type="term" value="P:translation"/>
    <property type="evidence" value="ECO:0007669"/>
    <property type="project" value="UniProtKB-UniRule"/>
</dbReference>
<dbReference type="CDD" id="cd14869">
    <property type="entry name" value="uS7_Bacteria"/>
    <property type="match status" value="1"/>
</dbReference>
<dbReference type="FunFam" id="1.10.455.10:FF:000001">
    <property type="entry name" value="30S ribosomal protein S7"/>
    <property type="match status" value="1"/>
</dbReference>
<dbReference type="Gene3D" id="1.10.455.10">
    <property type="entry name" value="Ribosomal protein S7 domain"/>
    <property type="match status" value="1"/>
</dbReference>
<dbReference type="HAMAP" id="MF_00480_B">
    <property type="entry name" value="Ribosomal_uS7_B"/>
    <property type="match status" value="1"/>
</dbReference>
<dbReference type="InterPro" id="IPR000235">
    <property type="entry name" value="Ribosomal_uS7"/>
</dbReference>
<dbReference type="InterPro" id="IPR005717">
    <property type="entry name" value="Ribosomal_uS7_bac/org-type"/>
</dbReference>
<dbReference type="InterPro" id="IPR020606">
    <property type="entry name" value="Ribosomal_uS7_CS"/>
</dbReference>
<dbReference type="InterPro" id="IPR023798">
    <property type="entry name" value="Ribosomal_uS7_dom"/>
</dbReference>
<dbReference type="InterPro" id="IPR036823">
    <property type="entry name" value="Ribosomal_uS7_dom_sf"/>
</dbReference>
<dbReference type="NCBIfam" id="TIGR01029">
    <property type="entry name" value="rpsG_bact"/>
    <property type="match status" value="1"/>
</dbReference>
<dbReference type="PANTHER" id="PTHR11205">
    <property type="entry name" value="RIBOSOMAL PROTEIN S7"/>
    <property type="match status" value="1"/>
</dbReference>
<dbReference type="Pfam" id="PF00177">
    <property type="entry name" value="Ribosomal_S7"/>
    <property type="match status" value="1"/>
</dbReference>
<dbReference type="PIRSF" id="PIRSF002122">
    <property type="entry name" value="RPS7p_RPS7a_RPS5e_RPS7o"/>
    <property type="match status" value="1"/>
</dbReference>
<dbReference type="SUPFAM" id="SSF47973">
    <property type="entry name" value="Ribosomal protein S7"/>
    <property type="match status" value="1"/>
</dbReference>
<dbReference type="PROSITE" id="PS00052">
    <property type="entry name" value="RIBOSOMAL_S7"/>
    <property type="match status" value="1"/>
</dbReference>
<proteinExistence type="inferred from homology"/>
<comment type="function">
    <text evidence="1">One of the primary rRNA binding proteins, it binds directly to 16S rRNA where it nucleates assembly of the head domain of the 30S subunit. Is located at the subunit interface close to the decoding center, probably blocks exit of the E-site tRNA.</text>
</comment>
<comment type="subunit">
    <text evidence="1">Part of the 30S ribosomal subunit. Contacts proteins S9 and S11.</text>
</comment>
<comment type="similarity">
    <text evidence="1">Belongs to the universal ribosomal protein uS7 family.</text>
</comment>
<evidence type="ECO:0000255" key="1">
    <source>
        <dbReference type="HAMAP-Rule" id="MF_00480"/>
    </source>
</evidence>
<evidence type="ECO:0000305" key="2"/>
<name>RS7_STRTD</name>
<gene>
    <name evidence="1" type="primary">rpsG</name>
    <name type="ordered locus">STER_1763</name>
</gene>
<organism>
    <name type="scientific">Streptococcus thermophilus (strain ATCC BAA-491 / LMD-9)</name>
    <dbReference type="NCBI Taxonomy" id="322159"/>
    <lineage>
        <taxon>Bacteria</taxon>
        <taxon>Bacillati</taxon>
        <taxon>Bacillota</taxon>
        <taxon>Bacilli</taxon>
        <taxon>Lactobacillales</taxon>
        <taxon>Streptococcaceae</taxon>
        <taxon>Streptococcus</taxon>
    </lineage>
</organism>
<sequence length="156" mass="17763">MSRKNRAPKREVLADPLYNSKIVTRLINRVMLDGKRGTAATIVYDAFEQIKEATGNDALEVFETAMDNIMPVLEVRARRVGGSNYQVPVEVRPERRITLGLRWLVNASRARGEHTMKERLAKEIMDAANNTGAAVKKREDTHKMAEANRAFAHFRW</sequence>
<keyword id="KW-0687">Ribonucleoprotein</keyword>
<keyword id="KW-0689">Ribosomal protein</keyword>
<keyword id="KW-0694">RNA-binding</keyword>
<keyword id="KW-0699">rRNA-binding</keyword>
<keyword id="KW-0820">tRNA-binding</keyword>
<reference key="1">
    <citation type="journal article" date="2006" name="Proc. Natl. Acad. Sci. U.S.A.">
        <title>Comparative genomics of the lactic acid bacteria.</title>
        <authorList>
            <person name="Makarova K.S."/>
            <person name="Slesarev A."/>
            <person name="Wolf Y.I."/>
            <person name="Sorokin A."/>
            <person name="Mirkin B."/>
            <person name="Koonin E.V."/>
            <person name="Pavlov A."/>
            <person name="Pavlova N."/>
            <person name="Karamychev V."/>
            <person name="Polouchine N."/>
            <person name="Shakhova V."/>
            <person name="Grigoriev I."/>
            <person name="Lou Y."/>
            <person name="Rohksar D."/>
            <person name="Lucas S."/>
            <person name="Huang K."/>
            <person name="Goodstein D.M."/>
            <person name="Hawkins T."/>
            <person name="Plengvidhya V."/>
            <person name="Welker D."/>
            <person name="Hughes J."/>
            <person name="Goh Y."/>
            <person name="Benson A."/>
            <person name="Baldwin K."/>
            <person name="Lee J.-H."/>
            <person name="Diaz-Muniz I."/>
            <person name="Dosti B."/>
            <person name="Smeianov V."/>
            <person name="Wechter W."/>
            <person name="Barabote R."/>
            <person name="Lorca G."/>
            <person name="Altermann E."/>
            <person name="Barrangou R."/>
            <person name="Ganesan B."/>
            <person name="Xie Y."/>
            <person name="Rawsthorne H."/>
            <person name="Tamir D."/>
            <person name="Parker C."/>
            <person name="Breidt F."/>
            <person name="Broadbent J.R."/>
            <person name="Hutkins R."/>
            <person name="O'Sullivan D."/>
            <person name="Steele J."/>
            <person name="Unlu G."/>
            <person name="Saier M.H. Jr."/>
            <person name="Klaenhammer T."/>
            <person name="Richardson P."/>
            <person name="Kozyavkin S."/>
            <person name="Weimer B.C."/>
            <person name="Mills D.A."/>
        </authorList>
    </citation>
    <scope>NUCLEOTIDE SEQUENCE [LARGE SCALE GENOMIC DNA]</scope>
    <source>
        <strain>ATCC BAA-491 / LMD-9</strain>
    </source>
</reference>
<protein>
    <recommendedName>
        <fullName evidence="1">Small ribosomal subunit protein uS7</fullName>
    </recommendedName>
    <alternativeName>
        <fullName evidence="2">30S ribosomal protein S7</fullName>
    </alternativeName>
</protein>